<name>RT11_CHOCR</name>
<protein>
    <recommendedName>
        <fullName evidence="1">Small ribosomal subunit protein uS11m</fullName>
    </recommendedName>
    <alternativeName>
        <fullName>Ribosomal protein S11, mitochondrial</fullName>
    </alternativeName>
</protein>
<geneLocation type="mitochondrion"/>
<feature type="chain" id="PRO_0000123331" description="Small ribosomal subunit protein uS11m">
    <location>
        <begin position="1"/>
        <end position="116"/>
    </location>
</feature>
<organism>
    <name type="scientific">Chondrus crispus</name>
    <name type="common">Carrageen Irish moss</name>
    <name type="synonym">Polymorpha crispa</name>
    <dbReference type="NCBI Taxonomy" id="2769"/>
    <lineage>
        <taxon>Eukaryota</taxon>
        <taxon>Rhodophyta</taxon>
        <taxon>Florideophyceae</taxon>
        <taxon>Rhodymeniophycidae</taxon>
        <taxon>Gigartinales</taxon>
        <taxon>Gigartinaceae</taxon>
        <taxon>Chondrus</taxon>
    </lineage>
</organism>
<proteinExistence type="inferred from homology"/>
<evidence type="ECO:0000305" key="1"/>
<accession>P48941</accession>
<comment type="subcellular location">
    <subcellularLocation>
        <location>Mitochondrion</location>
    </subcellularLocation>
</comment>
<comment type="similarity">
    <text evidence="1">Belongs to the universal ribosomal protein uS11 family.</text>
</comment>
<reference key="1">
    <citation type="journal article" date="1995" name="J. Mol. Biol.">
        <title>Complete sequence of the mitochondrial DNA of the rhodophyte Chondrus crispus (Gigartinales). Gene content and genome organization.</title>
        <authorList>
            <person name="Leblanc C."/>
            <person name="Boyen C."/>
            <person name="Richard O."/>
            <person name="Bonnard G."/>
            <person name="Grienenberger J.-M."/>
            <person name="Kloareg B."/>
        </authorList>
    </citation>
    <scope>NUCLEOTIDE SEQUENCE [GENOMIC DNA]</scope>
    <source>
        <tissue>Apices</tissue>
    </source>
</reference>
<dbReference type="EMBL" id="Z47547">
    <property type="protein sequence ID" value="CAA87615.1"/>
    <property type="molecule type" value="Genomic_DNA"/>
</dbReference>
<dbReference type="PIR" id="S59099">
    <property type="entry name" value="S59099"/>
</dbReference>
<dbReference type="RefSeq" id="NP_062491.1">
    <property type="nucleotide sequence ID" value="NC_001677.2"/>
</dbReference>
<dbReference type="SMR" id="P48941"/>
<dbReference type="GeneID" id="809361"/>
<dbReference type="KEGG" id="ccp:ChcroMp12"/>
<dbReference type="GO" id="GO:0005739">
    <property type="term" value="C:mitochondrion"/>
    <property type="evidence" value="ECO:0007669"/>
    <property type="project" value="UniProtKB-SubCell"/>
</dbReference>
<dbReference type="GO" id="GO:1990904">
    <property type="term" value="C:ribonucleoprotein complex"/>
    <property type="evidence" value="ECO:0007669"/>
    <property type="project" value="UniProtKB-KW"/>
</dbReference>
<dbReference type="GO" id="GO:0005840">
    <property type="term" value="C:ribosome"/>
    <property type="evidence" value="ECO:0007669"/>
    <property type="project" value="UniProtKB-KW"/>
</dbReference>
<dbReference type="GO" id="GO:0003735">
    <property type="term" value="F:structural constituent of ribosome"/>
    <property type="evidence" value="ECO:0007669"/>
    <property type="project" value="InterPro"/>
</dbReference>
<dbReference type="GO" id="GO:0006412">
    <property type="term" value="P:translation"/>
    <property type="evidence" value="ECO:0007669"/>
    <property type="project" value="InterPro"/>
</dbReference>
<dbReference type="Gene3D" id="3.30.420.80">
    <property type="entry name" value="Ribosomal protein S11"/>
    <property type="match status" value="1"/>
</dbReference>
<dbReference type="HAMAP" id="MF_01310">
    <property type="entry name" value="Ribosomal_uS11"/>
    <property type="match status" value="1"/>
</dbReference>
<dbReference type="InterPro" id="IPR001971">
    <property type="entry name" value="Ribosomal_uS11"/>
</dbReference>
<dbReference type="InterPro" id="IPR036967">
    <property type="entry name" value="Ribosomal_uS11_sf"/>
</dbReference>
<dbReference type="PANTHER" id="PTHR11759">
    <property type="entry name" value="40S RIBOSOMAL PROTEIN S14/30S RIBOSOMAL PROTEIN S11"/>
    <property type="match status" value="1"/>
</dbReference>
<dbReference type="Pfam" id="PF00411">
    <property type="entry name" value="Ribosomal_S11"/>
    <property type="match status" value="1"/>
</dbReference>
<dbReference type="PIRSF" id="PIRSF002131">
    <property type="entry name" value="Ribosomal_S11"/>
    <property type="match status" value="1"/>
</dbReference>
<dbReference type="SUPFAM" id="SSF53137">
    <property type="entry name" value="Translational machinery components"/>
    <property type="match status" value="1"/>
</dbReference>
<sequence>MENKSKLIVLSILFTPNNILYYATQLNGNIIFWTSSGVHKQKNTKKVTLISITTVINYIKYKSVNYKGIHIRTKGFSKNKKLVIKQLKQSTLNILSISDKISWPHNGCKKRKIRRI</sequence>
<keyword id="KW-0496">Mitochondrion</keyword>
<keyword id="KW-0687">Ribonucleoprotein</keyword>
<keyword id="KW-0689">Ribosomal protein</keyword>
<gene>
    <name type="primary">RPS11</name>
</gene>